<organism>
    <name type="scientific">Homo sapiens</name>
    <name type="common">Human</name>
    <dbReference type="NCBI Taxonomy" id="9606"/>
    <lineage>
        <taxon>Eukaryota</taxon>
        <taxon>Metazoa</taxon>
        <taxon>Chordata</taxon>
        <taxon>Craniata</taxon>
        <taxon>Vertebrata</taxon>
        <taxon>Euteleostomi</taxon>
        <taxon>Mammalia</taxon>
        <taxon>Eutheria</taxon>
        <taxon>Euarchontoglires</taxon>
        <taxon>Primates</taxon>
        <taxon>Haplorrhini</taxon>
        <taxon>Catarrhini</taxon>
        <taxon>Hominidae</taxon>
        <taxon>Homo</taxon>
    </lineage>
</organism>
<dbReference type="EMBL" id="AL109806">
    <property type="status" value="NOT_ANNOTATED_CDS"/>
    <property type="molecule type" value="Genomic_DNA"/>
</dbReference>
<dbReference type="EMBL" id="BC029411">
    <property type="protein sequence ID" value="AAH29411.1"/>
    <property type="status" value="ALT_SEQ"/>
    <property type="molecule type" value="mRNA"/>
</dbReference>
<dbReference type="EMBL" id="BC107704">
    <property type="protein sequence ID" value="AAI07705.1"/>
    <property type="molecule type" value="mRNA"/>
</dbReference>
<dbReference type="CCDS" id="CCDS33493.1"/>
<dbReference type="RefSeq" id="NP_001012989.2">
    <property type="nucleotide sequence ID" value="NM_001012971.4"/>
</dbReference>
<dbReference type="RefSeq" id="XP_047295920.1">
    <property type="nucleotide sequence ID" value="XM_047439964.1"/>
</dbReference>
<dbReference type="RefSeq" id="XP_047295921.1">
    <property type="nucleotide sequence ID" value="XM_047439965.1"/>
</dbReference>
<dbReference type="RefSeq" id="XP_054179116.1">
    <property type="nucleotide sequence ID" value="XM_054323141.1"/>
</dbReference>
<dbReference type="RefSeq" id="XP_054179117.1">
    <property type="nucleotide sequence ID" value="XM_054323142.1"/>
</dbReference>
<dbReference type="BioGRID" id="128313">
    <property type="interactions" value="264"/>
</dbReference>
<dbReference type="FunCoup" id="Q5JX71">
    <property type="interactions" value="69"/>
</dbReference>
<dbReference type="IntAct" id="Q5JX71">
    <property type="interactions" value="228"/>
</dbReference>
<dbReference type="STRING" id="9606.ENSP00000360379"/>
<dbReference type="PhosphoSitePlus" id="Q5JX71"/>
<dbReference type="BioMuta" id="FAM209A"/>
<dbReference type="DMDM" id="74742707"/>
<dbReference type="MassIVE" id="Q5JX71"/>
<dbReference type="PaxDb" id="9606-ENSP00000360379"/>
<dbReference type="PeptideAtlas" id="Q5JX71"/>
<dbReference type="ProteomicsDB" id="63432"/>
<dbReference type="Antibodypedia" id="52593">
    <property type="antibodies" value="33 antibodies from 6 providers"/>
</dbReference>
<dbReference type="DNASU" id="200232"/>
<dbReference type="Ensembl" id="ENST00000371328.5">
    <property type="protein sequence ID" value="ENSP00000360379.4"/>
    <property type="gene ID" value="ENSG00000124103.10"/>
</dbReference>
<dbReference type="GeneID" id="200232"/>
<dbReference type="KEGG" id="hsa:200232"/>
<dbReference type="MANE-Select" id="ENST00000371328.5">
    <property type="protein sequence ID" value="ENSP00000360379.4"/>
    <property type="RefSeq nucleotide sequence ID" value="NM_001012971.4"/>
    <property type="RefSeq protein sequence ID" value="NP_001012989.2"/>
</dbReference>
<dbReference type="UCSC" id="uc002xxx.4">
    <property type="organism name" value="human"/>
</dbReference>
<dbReference type="AGR" id="HGNC:16100"/>
<dbReference type="CTD" id="200232"/>
<dbReference type="DisGeNET" id="200232"/>
<dbReference type="GeneCards" id="FAM209A"/>
<dbReference type="HGNC" id="HGNC:16100">
    <property type="gene designation" value="FAM209A"/>
</dbReference>
<dbReference type="HPA" id="ENSG00000124103">
    <property type="expression patterns" value="Tissue enriched (testis)"/>
</dbReference>
<dbReference type="neXtProt" id="NX_Q5JX71"/>
<dbReference type="OpenTargets" id="ENSG00000124103"/>
<dbReference type="PharmGKB" id="PA134974173"/>
<dbReference type="VEuPathDB" id="HostDB:ENSG00000124103"/>
<dbReference type="eggNOG" id="ENOG502SQY6">
    <property type="taxonomic scope" value="Eukaryota"/>
</dbReference>
<dbReference type="GeneTree" id="ENSGT00390000005057"/>
<dbReference type="HOGENOM" id="CLU_1585866_0_0_1"/>
<dbReference type="InParanoid" id="Q5JX71"/>
<dbReference type="OMA" id="TICEIWG"/>
<dbReference type="OrthoDB" id="9507615at2759"/>
<dbReference type="PAN-GO" id="Q5JX71">
    <property type="GO annotations" value="0 GO annotations based on evolutionary models"/>
</dbReference>
<dbReference type="PhylomeDB" id="Q5JX71"/>
<dbReference type="TreeFam" id="TF338191"/>
<dbReference type="PathwayCommons" id="Q5JX71"/>
<dbReference type="SignaLink" id="Q5JX71"/>
<dbReference type="BioGRID-ORCS" id="200232">
    <property type="hits" value="11 hits in 1064 CRISPR screens"/>
</dbReference>
<dbReference type="ChiTaRS" id="FAM209A">
    <property type="organism name" value="human"/>
</dbReference>
<dbReference type="GenomeRNAi" id="200232"/>
<dbReference type="Pharos" id="Q5JX71">
    <property type="development level" value="Tdark"/>
</dbReference>
<dbReference type="PRO" id="PR:Q5JX71"/>
<dbReference type="Proteomes" id="UP000005640">
    <property type="component" value="Chromosome 20"/>
</dbReference>
<dbReference type="RNAct" id="Q5JX71">
    <property type="molecule type" value="protein"/>
</dbReference>
<dbReference type="Bgee" id="ENSG00000124103">
    <property type="expression patterns" value="Expressed in left testis and 87 other cell types or tissues"/>
</dbReference>
<dbReference type="GO" id="GO:0070062">
    <property type="term" value="C:extracellular exosome"/>
    <property type="evidence" value="ECO:0007005"/>
    <property type="project" value="UniProtKB"/>
</dbReference>
<dbReference type="GO" id="GO:0005637">
    <property type="term" value="C:nuclear inner membrane"/>
    <property type="evidence" value="ECO:0000250"/>
    <property type="project" value="UniProtKB"/>
</dbReference>
<dbReference type="GO" id="GO:0005634">
    <property type="term" value="C:nucleus"/>
    <property type="evidence" value="ECO:0007005"/>
    <property type="project" value="UniProtKB"/>
</dbReference>
<dbReference type="GO" id="GO:0030154">
    <property type="term" value="P:cell differentiation"/>
    <property type="evidence" value="ECO:0007669"/>
    <property type="project" value="UniProtKB-KW"/>
</dbReference>
<dbReference type="GO" id="GO:0007283">
    <property type="term" value="P:spermatogenesis"/>
    <property type="evidence" value="ECO:0007669"/>
    <property type="project" value="UniProtKB-KW"/>
</dbReference>
<dbReference type="InterPro" id="IPR027943">
    <property type="entry name" value="FAM209"/>
</dbReference>
<dbReference type="PANTHER" id="PTHR35157">
    <property type="entry name" value="PROTEIN FAM209A"/>
    <property type="match status" value="1"/>
</dbReference>
<dbReference type="PANTHER" id="PTHR35157:SF1">
    <property type="entry name" value="PROTEIN FAM209A"/>
    <property type="match status" value="1"/>
</dbReference>
<dbReference type="Pfam" id="PF15206">
    <property type="entry name" value="FAM209"/>
    <property type="match status" value="1"/>
</dbReference>
<reference key="1">
    <citation type="journal article" date="2001" name="Nature">
        <title>The DNA sequence and comparative analysis of human chromosome 20.</title>
        <authorList>
            <person name="Deloukas P."/>
            <person name="Matthews L.H."/>
            <person name="Ashurst J.L."/>
            <person name="Burton J."/>
            <person name="Gilbert J.G.R."/>
            <person name="Jones M."/>
            <person name="Stavrides G."/>
            <person name="Almeida J.P."/>
            <person name="Babbage A.K."/>
            <person name="Bagguley C.L."/>
            <person name="Bailey J."/>
            <person name="Barlow K.F."/>
            <person name="Bates K.N."/>
            <person name="Beard L.M."/>
            <person name="Beare D.M."/>
            <person name="Beasley O.P."/>
            <person name="Bird C.P."/>
            <person name="Blakey S.E."/>
            <person name="Bridgeman A.M."/>
            <person name="Brown A.J."/>
            <person name="Buck D."/>
            <person name="Burrill W.D."/>
            <person name="Butler A.P."/>
            <person name="Carder C."/>
            <person name="Carter N.P."/>
            <person name="Chapman J.C."/>
            <person name="Clamp M."/>
            <person name="Clark G."/>
            <person name="Clark L.N."/>
            <person name="Clark S.Y."/>
            <person name="Clee C.M."/>
            <person name="Clegg S."/>
            <person name="Cobley V.E."/>
            <person name="Collier R.E."/>
            <person name="Connor R.E."/>
            <person name="Corby N.R."/>
            <person name="Coulson A."/>
            <person name="Coville G.J."/>
            <person name="Deadman R."/>
            <person name="Dhami P.D."/>
            <person name="Dunn M."/>
            <person name="Ellington A.G."/>
            <person name="Frankland J.A."/>
            <person name="Fraser A."/>
            <person name="French L."/>
            <person name="Garner P."/>
            <person name="Grafham D.V."/>
            <person name="Griffiths C."/>
            <person name="Griffiths M.N.D."/>
            <person name="Gwilliam R."/>
            <person name="Hall R.E."/>
            <person name="Hammond S."/>
            <person name="Harley J.L."/>
            <person name="Heath P.D."/>
            <person name="Ho S."/>
            <person name="Holden J.L."/>
            <person name="Howden P.J."/>
            <person name="Huckle E."/>
            <person name="Hunt A.R."/>
            <person name="Hunt S.E."/>
            <person name="Jekosch K."/>
            <person name="Johnson C.M."/>
            <person name="Johnson D."/>
            <person name="Kay M.P."/>
            <person name="Kimberley A.M."/>
            <person name="King A."/>
            <person name="Knights A."/>
            <person name="Laird G.K."/>
            <person name="Lawlor S."/>
            <person name="Lehvaeslaiho M.H."/>
            <person name="Leversha M.A."/>
            <person name="Lloyd C."/>
            <person name="Lloyd D.M."/>
            <person name="Lovell J.D."/>
            <person name="Marsh V.L."/>
            <person name="Martin S.L."/>
            <person name="McConnachie L.J."/>
            <person name="McLay K."/>
            <person name="McMurray A.A."/>
            <person name="Milne S.A."/>
            <person name="Mistry D."/>
            <person name="Moore M.J.F."/>
            <person name="Mullikin J.C."/>
            <person name="Nickerson T."/>
            <person name="Oliver K."/>
            <person name="Parker A."/>
            <person name="Patel R."/>
            <person name="Pearce T.A.V."/>
            <person name="Peck A.I."/>
            <person name="Phillimore B.J.C.T."/>
            <person name="Prathalingam S.R."/>
            <person name="Plumb R.W."/>
            <person name="Ramsay H."/>
            <person name="Rice C.M."/>
            <person name="Ross M.T."/>
            <person name="Scott C.E."/>
            <person name="Sehra H.K."/>
            <person name="Shownkeen R."/>
            <person name="Sims S."/>
            <person name="Skuce C.D."/>
            <person name="Smith M.L."/>
            <person name="Soderlund C."/>
            <person name="Steward C.A."/>
            <person name="Sulston J.E."/>
            <person name="Swann R.M."/>
            <person name="Sycamore N."/>
            <person name="Taylor R."/>
            <person name="Tee L."/>
            <person name="Thomas D.W."/>
            <person name="Thorpe A."/>
            <person name="Tracey A."/>
            <person name="Tromans A.C."/>
            <person name="Vaudin M."/>
            <person name="Wall M."/>
            <person name="Wallis J.M."/>
            <person name="Whitehead S.L."/>
            <person name="Whittaker P."/>
            <person name="Willey D.L."/>
            <person name="Williams L."/>
            <person name="Williams S.A."/>
            <person name="Wilming L."/>
            <person name="Wray P.W."/>
            <person name="Hubbard T."/>
            <person name="Durbin R.M."/>
            <person name="Bentley D.R."/>
            <person name="Beck S."/>
            <person name="Rogers J."/>
        </authorList>
    </citation>
    <scope>NUCLEOTIDE SEQUENCE [LARGE SCALE GENOMIC DNA]</scope>
</reference>
<reference key="2">
    <citation type="journal article" date="2004" name="Genome Res.">
        <title>The status, quality, and expansion of the NIH full-length cDNA project: the Mammalian Gene Collection (MGC).</title>
        <authorList>
            <consortium name="The MGC Project Team"/>
        </authorList>
    </citation>
    <scope>NUCLEOTIDE SEQUENCE [LARGE SCALE MRNA]</scope>
    <source>
        <tissue>Testis</tissue>
    </source>
</reference>
<reference key="3">
    <citation type="journal article" date="2024" name="Elife">
        <title>Disruption in CYLC1 leads to acrosome detachment, sperm head deformity, and male in/subfertility in humans and mice.</title>
        <authorList>
            <person name="Jin H.J."/>
            <person name="Fan Y."/>
            <person name="Yang X."/>
            <person name="Dong Y."/>
            <person name="Zhang X.Z."/>
            <person name="Geng X.Y."/>
            <person name="Yan Z."/>
            <person name="Wu L."/>
            <person name="Ma M."/>
            <person name="Li B."/>
            <person name="Lyu Q."/>
            <person name="Pan Y."/>
            <person name="Liu M."/>
            <person name="Kuang Y."/>
            <person name="Chen S.R."/>
        </authorList>
    </citation>
    <scope>INTERACTION WITH CYLC1</scope>
</reference>
<gene>
    <name evidence="6" type="primary">FAM209A</name>
    <name type="synonym">C20orf106</name>
</gene>
<name>F209A_HUMAN</name>
<protein>
    <recommendedName>
        <fullName>Protein FAM209A</fullName>
    </recommendedName>
</protein>
<feature type="signal peptide" evidence="2">
    <location>
        <begin position="1"/>
        <end position="19"/>
    </location>
</feature>
<feature type="chain" id="PRO_0000264155" description="Protein FAM209A">
    <location>
        <begin position="20"/>
        <end position="171"/>
    </location>
</feature>
<feature type="topological domain" description="Extracellular" evidence="2">
    <location>
        <begin position="20"/>
        <end position="52"/>
    </location>
</feature>
<feature type="transmembrane region" description="Helical" evidence="2">
    <location>
        <begin position="53"/>
        <end position="73"/>
    </location>
</feature>
<feature type="topological domain" description="Cytoplasmic" evidence="2">
    <location>
        <begin position="74"/>
        <end position="171"/>
    </location>
</feature>
<feature type="region of interest" description="Disordered" evidence="3">
    <location>
        <begin position="81"/>
        <end position="107"/>
    </location>
</feature>
<feature type="coiled-coil region" evidence="2">
    <location>
        <begin position="114"/>
        <end position="139"/>
    </location>
</feature>
<feature type="sequence variant" id="VAR_029621" description="In dbSNP:rs707554.">
    <original>V</original>
    <variation>A</variation>
    <location>
        <position position="66"/>
    </location>
</feature>
<feature type="sequence variant" id="VAR_033761" description="In dbSNP:rs1054343.">
    <original>L</original>
    <variation>F</variation>
    <location>
        <position position="95"/>
    </location>
</feature>
<feature type="sequence variant" id="VAR_029622" description="In dbSNP:rs1054349.">
    <original>M</original>
    <variation>K</variation>
    <location>
        <position position="117"/>
    </location>
</feature>
<feature type="sequence variant" id="VAR_029623" description="In dbSNP:rs1054358.">
    <original>R</original>
    <variation>G</variation>
    <location>
        <position position="135"/>
    </location>
</feature>
<feature type="sequence variant" id="VAR_029624" description="In dbSNP:rs1054361.">
    <original>R</original>
    <variation>K</variation>
    <location>
        <position position="146"/>
    </location>
</feature>
<feature type="sequence conflict" description="In Ref. 2; AAH29411." evidence="5" ref="2">
    <original>P</original>
    <variation>L</variation>
    <location>
        <position position="98"/>
    </location>
</feature>
<sequence length="171" mass="19603">MWTLKSSLVLLLCLTCSYAFMFSSLRQKTSEPQGKVQYGEHFRIRQNLPEHTQGWLGSKWLWLLFVVVPFVILQCQRDSEKNKEQSPPGLRGGQLHSPLKKKRNASPNKDCAFNTLMELEVELMKFVSKVRNLKRAMATGSGSNLRLRKSEMPADPYHVTICEIWGEESSS</sequence>
<evidence type="ECO:0000250" key="1">
    <source>
        <dbReference type="UniProtKB" id="A2APA5"/>
    </source>
</evidence>
<evidence type="ECO:0000255" key="2"/>
<evidence type="ECO:0000256" key="3">
    <source>
        <dbReference type="SAM" id="MobiDB-lite"/>
    </source>
</evidence>
<evidence type="ECO:0000269" key="4">
    <source>
    </source>
</evidence>
<evidence type="ECO:0000305" key="5"/>
<evidence type="ECO:0000312" key="6">
    <source>
        <dbReference type="HGNC" id="HGNC:16100"/>
    </source>
</evidence>
<accession>Q5JX71</accession>
<accession>Q05C43</accession>
<proteinExistence type="evidence at protein level"/>
<comment type="function">
    <text evidence="1">May play a role in sperm acrosome biogenesis.</text>
</comment>
<comment type="subunit">
    <text evidence="1 4">Interacts with DPY19L2 (By similarity). Interacts with CYLC1; the interaction may be relevant for proper acrosome attachment to the nuclear envelope (PubMed:38573307).</text>
</comment>
<comment type="interaction">
    <interactant intactId="EBI-18304435">
        <id>Q5JX71</id>
    </interactant>
    <interactant intactId="EBI-11277970">
        <id>Q9UHX3</id>
        <label>ADGRE2</label>
    </interactant>
    <organismsDiffer>false</organismsDiffer>
    <experiments>3</experiments>
</comment>
<comment type="interaction">
    <interactant intactId="EBI-18304435">
        <id>Q5JX71</id>
    </interactant>
    <interactant intactId="EBI-10827839">
        <id>Q15848</id>
        <label>ADIPOQ</label>
    </interactant>
    <organismsDiffer>false</organismsDiffer>
    <experiments>3</experiments>
</comment>
<comment type="interaction">
    <interactant intactId="EBI-18304435">
        <id>Q5JX71</id>
    </interactant>
    <interactant intactId="EBI-11522760">
        <id>Q6RW13-2</id>
        <label>AGTRAP</label>
    </interactant>
    <organismsDiffer>false</organismsDiffer>
    <experiments>3</experiments>
</comment>
<comment type="interaction">
    <interactant intactId="EBI-18304435">
        <id>Q5JX71</id>
    </interactant>
    <interactant intactId="EBI-11957045">
        <id>Q9NVV5-2</id>
        <label>AIG1</label>
    </interactant>
    <organismsDiffer>false</organismsDiffer>
    <experiments>3</experiments>
</comment>
<comment type="interaction">
    <interactant intactId="EBI-18304435">
        <id>Q5JX71</id>
    </interactant>
    <interactant intactId="EBI-3921603">
        <id>Q9BVK2</id>
        <label>ALG8</label>
    </interactant>
    <organismsDiffer>false</organismsDiffer>
    <experiments>3</experiments>
</comment>
<comment type="interaction">
    <interactant intactId="EBI-18304435">
        <id>Q5JX71</id>
    </interactant>
    <interactant intactId="EBI-12109402">
        <id>Q86W74-2</id>
        <label>ANKRD46</label>
    </interactant>
    <organismsDiffer>false</organismsDiffer>
    <experiments>3</experiments>
</comment>
<comment type="interaction">
    <interactant intactId="EBI-18304435">
        <id>Q5JX71</id>
    </interactant>
    <interactant intactId="EBI-723950">
        <id>Q9HDC9</id>
        <label>APMAP</label>
    </interactant>
    <organismsDiffer>false</organismsDiffer>
    <experiments>3</experiments>
</comment>
<comment type="interaction">
    <interactant intactId="EBI-18304435">
        <id>Q5JX71</id>
    </interactant>
    <interactant intactId="EBI-1220113">
        <id>P02656</id>
        <label>APOC3</label>
    </interactant>
    <organismsDiffer>false</organismsDiffer>
    <experiments>3</experiments>
</comment>
<comment type="interaction">
    <interactant intactId="EBI-18304435">
        <id>Q5JX71</id>
    </interactant>
    <interactant intactId="EBI-715495">
        <id>P05090</id>
        <label>APOD</label>
    </interactant>
    <organismsDiffer>false</organismsDiffer>
    <experiments>3</experiments>
</comment>
<comment type="interaction">
    <interactant intactId="EBI-18304435">
        <id>Q5JX71</id>
    </interactant>
    <interactant intactId="EBI-4290634">
        <id>Q9BQE5</id>
        <label>APOL2</label>
    </interactant>
    <organismsDiffer>false</organismsDiffer>
    <experiments>3</experiments>
</comment>
<comment type="interaction">
    <interactant intactId="EBI-18304435">
        <id>Q5JX71</id>
    </interactant>
    <interactant intactId="EBI-745213">
        <id>P29972</id>
        <label>AQP1</label>
    </interactant>
    <organismsDiffer>false</organismsDiffer>
    <experiments>3</experiments>
</comment>
<comment type="interaction">
    <interactant intactId="EBI-18304435">
        <id>Q5JX71</id>
    </interactant>
    <interactant intactId="EBI-12701138">
        <id>P41181</id>
        <label>AQP2</label>
    </interactant>
    <organismsDiffer>false</organismsDiffer>
    <experiments>3</experiments>
</comment>
<comment type="interaction">
    <interactant intactId="EBI-18304435">
        <id>Q5JX71</id>
    </interactant>
    <interactant intactId="EBI-2808854">
        <id>Q92482</id>
        <label>AQP3</label>
    </interactant>
    <organismsDiffer>false</organismsDiffer>
    <experiments>3</experiments>
</comment>
<comment type="interaction">
    <interactant intactId="EBI-18304435">
        <id>Q5JX71</id>
    </interactant>
    <interactant intactId="EBI-11724186">
        <id>Q9H2C2</id>
        <label>ARV1</label>
    </interactant>
    <organismsDiffer>false</organismsDiffer>
    <experiments>3</experiments>
</comment>
<comment type="interaction">
    <interactant intactId="EBI-18304435">
        <id>Q5JX71</id>
    </interactant>
    <interactant intactId="EBI-1172335">
        <id>P07306</id>
        <label>ASGR1</label>
    </interactant>
    <organismsDiffer>false</organismsDiffer>
    <experiments>3</experiments>
</comment>
<comment type="interaction">
    <interactant intactId="EBI-18304435">
        <id>Q5JX71</id>
    </interactant>
    <interactant intactId="EBI-12069500">
        <id>Q9HD20-3</id>
        <label>ATP13A1</label>
    </interactant>
    <organismsDiffer>false</organismsDiffer>
    <experiments>3</experiments>
</comment>
<comment type="interaction">
    <interactant intactId="EBI-18304435">
        <id>Q5JX71</id>
    </interactant>
    <interactant intactId="EBI-1042940">
        <id>Q8NHY0</id>
        <label>B4GALNT2</label>
    </interactant>
    <organismsDiffer>false</organismsDiffer>
    <experiments>3</experiments>
</comment>
<comment type="interaction">
    <interactant intactId="EBI-18304435">
        <id>Q5JX71</id>
    </interactant>
    <interactant intactId="EBI-12275524">
        <id>P23560-2</id>
        <label>BDNF</label>
    </interactant>
    <organismsDiffer>false</organismsDiffer>
    <experiments>3</experiments>
</comment>
<comment type="interaction">
    <interactant intactId="EBI-18304435">
        <id>Q5JX71</id>
    </interactant>
    <interactant intactId="EBI-749204">
        <id>O15155</id>
        <label>BET1</label>
    </interactant>
    <organismsDiffer>false</organismsDiffer>
    <experiments>3</experiments>
</comment>
<comment type="interaction">
    <interactant intactId="EBI-18304435">
        <id>Q5JX71</id>
    </interactant>
    <interactant intactId="EBI-700794">
        <id>Q13323</id>
        <label>BIK</label>
    </interactant>
    <organismsDiffer>false</organismsDiffer>
    <experiments>3</experiments>
</comment>
<comment type="interaction">
    <interactant intactId="EBI-18304435">
        <id>Q5JX71</id>
    </interactant>
    <interactant intactId="EBI-3922513">
        <id>O95393</id>
        <label>BMP10</label>
    </interactant>
    <organismsDiffer>false</organismsDiffer>
    <experiments>3</experiments>
</comment>
<comment type="interaction">
    <interactant intactId="EBI-18304435">
        <id>Q5JX71</id>
    </interactant>
    <interactant intactId="EBI-752094">
        <id>Q12982</id>
        <label>BNIP2</label>
    </interactant>
    <organismsDiffer>false</organismsDiffer>
    <experiments>3</experiments>
</comment>
<comment type="interaction">
    <interactant intactId="EBI-18304435">
        <id>Q5JX71</id>
    </interactant>
    <interactant intactId="EBI-749464">
        <id>Q12983</id>
        <label>BNIP3</label>
    </interactant>
    <organismsDiffer>false</organismsDiffer>
    <experiments>3</experiments>
</comment>
<comment type="interaction">
    <interactant intactId="EBI-18304435">
        <id>Q5JX71</id>
    </interactant>
    <interactant intactId="EBI-8648738">
        <id>Q8WVV5</id>
        <label>BTN2A2</label>
    </interactant>
    <organismsDiffer>false</organismsDiffer>
    <experiments>3</experiments>
</comment>
<comment type="interaction">
    <interactant intactId="EBI-18304435">
        <id>Q5JX71</id>
    </interactant>
    <interactant intactId="EBI-2836238">
        <id>Q96F05</id>
        <label>C11orf24</label>
    </interactant>
    <organismsDiffer>false</organismsDiffer>
    <experiments>3</experiments>
</comment>
<comment type="interaction">
    <interactant intactId="EBI-18304435">
        <id>Q5JX71</id>
    </interactant>
    <interactant intactId="EBI-2835920">
        <id>P06681</id>
        <label>C2</label>
    </interactant>
    <organismsDiffer>false</organismsDiffer>
    <experiments>3</experiments>
</comment>
<comment type="interaction">
    <interactant intactId="EBI-18304435">
        <id>Q5JX71</id>
    </interactant>
    <interactant intactId="EBI-12003442">
        <id>Q8WVX3-2</id>
        <label>C4orf3</label>
    </interactant>
    <organismsDiffer>false</organismsDiffer>
    <experiments>3</experiments>
</comment>
<comment type="interaction">
    <interactant intactId="EBI-18304435">
        <id>Q5JX71</id>
    </interactant>
    <interactant intactId="EBI-16770554">
        <id>Q8WVQ1</id>
        <label>CANT1</label>
    </interactant>
    <organismsDiffer>false</organismsDiffer>
    <experiments>3</experiments>
</comment>
<comment type="interaction">
    <interactant intactId="EBI-18304435">
        <id>Q5JX71</id>
    </interactant>
    <interactant intactId="EBI-10271156">
        <id>Q8NHW4</id>
        <label>CCL4L2</label>
    </interactant>
    <organismsDiffer>false</organismsDiffer>
    <experiments>3</experiments>
</comment>
<comment type="interaction">
    <interactant intactId="EBI-18304435">
        <id>Q5JX71</id>
    </interactant>
    <interactant intactId="EBI-6657396">
        <id>P19397</id>
        <label>CD53</label>
    </interactant>
    <organismsDiffer>false</organismsDiffer>
    <experiments>3</experiments>
</comment>
<comment type="interaction">
    <interactant intactId="EBI-18304435">
        <id>Q5JX71</id>
    </interactant>
    <interactant intactId="EBI-297972">
        <id>P13987</id>
        <label>CD59</label>
    </interactant>
    <organismsDiffer>false</organismsDiffer>
    <experiments>3</experiments>
</comment>
<comment type="interaction">
    <interactant intactId="EBI-18304435">
        <id>Q5JX71</id>
    </interactant>
    <interactant intactId="EBI-712921">
        <id>P60033</id>
        <label>CD81</label>
    </interactant>
    <organismsDiffer>false</organismsDiffer>
    <experiments>3</experiments>
</comment>
<comment type="interaction">
    <interactant intactId="EBI-18304435">
        <id>Q5JX71</id>
    </interactant>
    <interactant intactId="EBI-358858">
        <id>O14735</id>
        <label>CDIPT</label>
    </interactant>
    <organismsDiffer>false</organismsDiffer>
    <experiments>3</experiments>
</comment>
<comment type="interaction">
    <interactant intactId="EBI-18304435">
        <id>Q5JX71</id>
    </interactant>
    <interactant intactId="EBI-13295305">
        <id>Q92903</id>
        <label>CDS1</label>
    </interactant>
    <organismsDiffer>false</organismsDiffer>
    <experiments>3</experiments>
</comment>
<comment type="interaction">
    <interactant intactId="EBI-18304435">
        <id>Q5JX71</id>
    </interactant>
    <interactant intactId="EBI-3913685">
        <id>O95674</id>
        <label>CDS2</label>
    </interactant>
    <organismsDiffer>false</organismsDiffer>
    <experiments>3</experiments>
</comment>
<comment type="interaction">
    <interactant intactId="EBI-18304435">
        <id>Q5JX71</id>
    </interactant>
    <interactant intactId="EBI-12256978">
        <id>Q8N6F1-2</id>
        <label>CLDN19</label>
    </interactant>
    <organismsDiffer>false</organismsDiffer>
    <experiments>3</experiments>
</comment>
<comment type="interaction">
    <interactant intactId="EBI-18304435">
        <id>Q5JX71</id>
    </interactant>
    <interactant intactId="EBI-751440">
        <id>P57739</id>
        <label>CLDN2</label>
    </interactant>
    <organismsDiffer>false</organismsDiffer>
    <experiments>3</experiments>
</comment>
<comment type="interaction">
    <interactant intactId="EBI-18304435">
        <id>Q5JX71</id>
    </interactant>
    <interactant intactId="EBI-9316372">
        <id>O14493</id>
        <label>CLDN4</label>
    </interactant>
    <organismsDiffer>false</organismsDiffer>
    <experiments>3</experiments>
</comment>
<comment type="interaction">
    <interactant intactId="EBI-18304435">
        <id>Q5JX71</id>
    </interactant>
    <interactant intactId="EBI-11959453">
        <id>Q8NHS1</id>
        <label>CLDND2</label>
    </interactant>
    <organismsDiffer>false</organismsDiffer>
    <experiments>3</experiments>
</comment>
<comment type="interaction">
    <interactant intactId="EBI-18304435">
        <id>Q5JX71</id>
    </interactant>
    <interactant intactId="EBI-2114729">
        <id>Q6UXB4</id>
        <label>CLEC4G</label>
    </interactant>
    <organismsDiffer>false</organismsDiffer>
    <experiments>3</experiments>
</comment>
<comment type="interaction">
    <interactant intactId="EBI-18304435">
        <id>Q5JX71</id>
    </interactant>
    <interactant intactId="EBI-6165897">
        <id>Q9NWW5</id>
        <label>CLN6</label>
    </interactant>
    <organismsDiffer>false</organismsDiffer>
    <experiments>3</experiments>
</comment>
<comment type="interaction">
    <interactant intactId="EBI-18304435">
        <id>Q5JX71</id>
    </interactant>
    <interactant intactId="EBI-2807956">
        <id>Q96FZ5</id>
        <label>CMTM7</label>
    </interactant>
    <organismsDiffer>false</organismsDiffer>
    <experiments>3</experiments>
</comment>
<comment type="interaction">
    <interactant intactId="EBI-18304435">
        <id>Q5JX71</id>
    </interactant>
    <interactant intactId="EBI-12172273">
        <id>O95406</id>
        <label>CNIH1</label>
    </interactant>
    <organismsDiffer>false</organismsDiffer>
    <experiments>3</experiments>
</comment>
<comment type="interaction">
    <interactant intactId="EBI-18304435">
        <id>Q5JX71</id>
    </interactant>
    <interactant intactId="EBI-2835965">
        <id>Q9BT09</id>
        <label>CNPY3</label>
    </interactant>
    <organismsDiffer>false</organismsDiffer>
    <experiments>3</experiments>
</comment>
<comment type="interaction">
    <interactant intactId="EBI-18304435">
        <id>Q5JX71</id>
    </interactant>
    <interactant intactId="EBI-12211159">
        <id>P29400-2</id>
        <label>COL4A5</label>
    </interactant>
    <organismsDiffer>false</organismsDiffer>
    <experiments>3</experiments>
</comment>
<comment type="interaction">
    <interactant intactId="EBI-18304435">
        <id>Q5JX71</id>
    </interactant>
    <interactant intactId="EBI-10241815">
        <id>Q4VAQ0</id>
        <label>COL8A2</label>
    </interactant>
    <organismsDiffer>false</organismsDiffer>
    <experiments>3</experiments>
</comment>
<comment type="interaction">
    <interactant intactId="EBI-18304435">
        <id>Q5JX71</id>
    </interactant>
    <interactant intactId="EBI-372265">
        <id>P21964</id>
        <label>COMT</label>
    </interactant>
    <organismsDiffer>false</organismsDiffer>
    <experiments>3</experiments>
</comment>
<comment type="interaction">
    <interactant intactId="EBI-18304435">
        <id>Q5JX71</id>
    </interactant>
    <interactant intactId="EBI-7883667">
        <id>P40313</id>
        <label>CTRL</label>
    </interactant>
    <organismsDiffer>false</organismsDiffer>
    <experiments>3</experiments>
</comment>
<comment type="interaction">
    <interactant intactId="EBI-18304435">
        <id>Q5JX71</id>
    </interactant>
    <interactant intactId="EBI-12019274">
        <id>Q4LDR2</id>
        <label>CTXN3</label>
    </interactant>
    <organismsDiffer>false</organismsDiffer>
    <experiments>3</experiments>
</comment>
<comment type="interaction">
    <interactant intactId="EBI-18304435">
        <id>Q5JX71</id>
    </interactant>
    <interactant intactId="EBI-717654">
        <id>O14569</id>
        <label>CYB561D2</label>
    </interactant>
    <organismsDiffer>false</organismsDiffer>
    <experiments>3</experiments>
</comment>
<comment type="interaction">
    <interactant intactId="EBI-18304435">
        <id>Q5JX71</id>
    </interactant>
    <interactant intactId="EBI-1058710">
        <id>O43169</id>
        <label>CYB5B</label>
    </interactant>
    <organismsDiffer>false</organismsDiffer>
    <experiments>3</experiments>
</comment>
<comment type="interaction">
    <interactant intactId="EBI-18304435">
        <id>Q5JX71</id>
    </interactant>
    <interactant intactId="EBI-2680384">
        <id>Q9BQA9</id>
        <label>CYBC1</label>
    </interactant>
    <organismsDiffer>false</organismsDiffer>
    <experiments>3</experiments>
</comment>
<comment type="interaction">
    <interactant intactId="EBI-18304435">
        <id>Q5JX71</id>
    </interactant>
    <interactant intactId="EBI-10244198">
        <id>Q5J5C9</id>
        <label>DEFB121</label>
    </interactant>
    <organismsDiffer>false</organismsDiffer>
    <experiments>3</experiments>
</comment>
<comment type="interaction">
    <interactant intactId="EBI-18304435">
        <id>Q5JX71</id>
    </interactant>
    <interactant intactId="EBI-18310688">
        <id>Q7Z7B8</id>
        <label>DEFB128</label>
    </interactant>
    <organismsDiffer>false</organismsDiffer>
    <experiments>3</experiments>
</comment>
<comment type="interaction">
    <interactant intactId="EBI-18304435">
        <id>Q5JX71</id>
    </interactant>
    <interactant intactId="EBI-8639143">
        <id>Q96LL9</id>
        <label>DNAJC30</label>
    </interactant>
    <organismsDiffer>false</organismsDiffer>
    <experiments>3</experiments>
</comment>
<comment type="interaction">
    <interactant intactId="EBI-18304435">
        <id>Q5JX71</id>
    </interactant>
    <interactant intactId="EBI-8645574">
        <id>Q9UPQ8</id>
        <label>DOLK</label>
    </interactant>
    <organismsDiffer>false</organismsDiffer>
    <experiments>3</experiments>
</comment>
<comment type="interaction">
    <interactant intactId="EBI-18304435">
        <id>Q5JX71</id>
    </interactant>
    <interactant intactId="EBI-3915253">
        <id>Q15125</id>
        <label>EBP</label>
    </interactant>
    <organismsDiffer>false</organismsDiffer>
    <experiments>3</experiments>
</comment>
<comment type="interaction">
    <interactant intactId="EBI-18304435">
        <id>Q5JX71</id>
    </interactant>
    <interactant intactId="EBI-2820492">
        <id>Q9BV81</id>
        <label>EMC6</label>
    </interactant>
    <organismsDiffer>false</organismsDiffer>
    <experiments>3</experiments>
</comment>
<comment type="interaction">
    <interactant intactId="EBI-18304435">
        <id>Q5JX71</id>
    </interactant>
    <interactant intactId="EBI-489887">
        <id>P50402</id>
        <label>EMD</label>
    </interactant>
    <organismsDiffer>false</organismsDiffer>
    <experiments>3</experiments>
</comment>
<comment type="interaction">
    <interactant intactId="EBI-18304435">
        <id>Q5JX71</id>
    </interactant>
    <interactant intactId="EBI-12279764">
        <id>O75355-2</id>
        <label>ENTPD3</label>
    </interactant>
    <organismsDiffer>false</organismsDiffer>
    <experiments>3</experiments>
</comment>
<comment type="interaction">
    <interactant intactId="EBI-18304435">
        <id>Q5JX71</id>
    </interactant>
    <interactant intactId="EBI-13052900">
        <id>Q5NDL2-3</id>
        <label>EOGT</label>
    </interactant>
    <organismsDiffer>false</organismsDiffer>
    <experiments>3</experiments>
</comment>
<comment type="interaction">
    <interactant intactId="EBI-18304435">
        <id>Q5JX71</id>
    </interactant>
    <interactant intactId="EBI-711490">
        <id>Q9UKR5</id>
        <label>ERG28</label>
    </interactant>
    <organismsDiffer>false</organismsDiffer>
    <experiments>3</experiments>
</comment>
<comment type="interaction">
    <interactant intactId="EBI-18304435">
        <id>Q5JX71</id>
    </interactant>
    <interactant intactId="EBI-10976398">
        <id>Q7Z2K6</id>
        <label>ERMP1</label>
    </interactant>
    <organismsDiffer>false</organismsDiffer>
    <experiments>3</experiments>
</comment>
<comment type="interaction">
    <interactant intactId="EBI-18304435">
        <id>Q5JX71</id>
    </interactant>
    <interactant intactId="EBI-11337888">
        <id>Q7L5A8</id>
        <label>FA2H</label>
    </interactant>
    <organismsDiffer>false</organismsDiffer>
    <experiments>3</experiments>
</comment>
<comment type="interaction">
    <interactant intactId="EBI-18304435">
        <id>Q5JX71</id>
    </interactant>
    <interactant intactId="EBI-11090967">
        <id>O75063</id>
        <label>FAM20B</label>
    </interactant>
    <organismsDiffer>false</organismsDiffer>
    <experiments>3</experiments>
</comment>
<comment type="interaction">
    <interactant intactId="EBI-18304435">
        <id>Q5JX71</id>
    </interactant>
    <interactant intactId="EBI-2876774">
        <id>Q92520</id>
        <label>FAM3C</label>
    </interactant>
    <organismsDiffer>false</organismsDiffer>
    <experiments>3</experiments>
</comment>
<comment type="interaction">
    <interactant intactId="EBI-18304435">
        <id>Q5JX71</id>
    </interactant>
    <interactant intactId="EBI-743099">
        <id>Q969F0</id>
        <label>FATE1</label>
    </interactant>
    <organismsDiffer>false</organismsDiffer>
    <experiments>3</experiments>
</comment>
<comment type="interaction">
    <interactant intactId="EBI-18304435">
        <id>Q5JX71</id>
    </interactant>
    <interactant intactId="EBI-714550">
        <id>P37268</id>
        <label>FDFT1</label>
    </interactant>
    <organismsDiffer>false</organismsDiffer>
    <experiments>3</experiments>
</comment>
<comment type="interaction">
    <interactant intactId="EBI-18304435">
        <id>Q5JX71</id>
    </interactant>
    <interactant intactId="EBI-3385283">
        <id>Q9Y3D6</id>
        <label>FIS1</label>
    </interactant>
    <organismsDiffer>false</organismsDiffer>
    <experiments>3</experiments>
</comment>
<comment type="interaction">
    <interactant intactId="EBI-18304435">
        <id>Q5JX71</id>
    </interactant>
    <interactant intactId="EBI-12175685">
        <id>Q14802-3</id>
        <label>FXYD3</label>
    </interactant>
    <organismsDiffer>false</organismsDiffer>
    <experiments>3</experiments>
</comment>
<comment type="interaction">
    <interactant intactId="EBI-18304435">
        <id>Q5JX71</id>
    </interactant>
    <interactant intactId="EBI-3436637">
        <id>P01350</id>
        <label>GAST</label>
    </interactant>
    <organismsDiffer>false</organismsDiffer>
    <experiments>3</experiments>
</comment>
<comment type="interaction">
    <interactant intactId="EBI-18304435">
        <id>Q5JX71</id>
    </interactant>
    <interactant intactId="EBI-2515857">
        <id>O43681</id>
        <label>GET3</label>
    </interactant>
    <organismsDiffer>false</organismsDiffer>
    <experiments>3</experiments>
</comment>
<comment type="interaction">
    <interactant intactId="EBI-18304435">
        <id>Q5JX71</id>
    </interactant>
    <interactant intactId="EBI-2868909">
        <id>Q9H3K2</id>
        <label>GHITM</label>
    </interactant>
    <organismsDiffer>false</organismsDiffer>
    <experiments>3</experiments>
</comment>
<comment type="interaction">
    <interactant intactId="EBI-18304435">
        <id>Q5JX71</id>
    </interactant>
    <interactant intactId="EBI-11991950">
        <id>Q8WWP7</id>
        <label>GIMAP1</label>
    </interactant>
    <organismsDiffer>false</organismsDiffer>
    <experiments>3</experiments>
</comment>
<comment type="interaction">
    <interactant intactId="EBI-18304435">
        <id>Q5JX71</id>
    </interactant>
    <interactant intactId="EBI-3905204">
        <id>P29033</id>
        <label>GJB2</label>
    </interactant>
    <organismsDiffer>false</organismsDiffer>
    <experiments>3</experiments>
</comment>
<comment type="interaction">
    <interactant intactId="EBI-18304435">
        <id>Q5JX71</id>
    </interactant>
    <interactant intactId="EBI-3933251">
        <id>Q9NS71</id>
        <label>GKN1</label>
    </interactant>
    <organismsDiffer>false</organismsDiffer>
    <experiments>3</experiments>
</comment>
<comment type="interaction">
    <interactant intactId="EBI-18304435">
        <id>Q5JX71</id>
    </interactant>
    <interactant intactId="EBI-13380976">
        <id>Q86XP6</id>
        <label>GKN2</label>
    </interactant>
    <organismsDiffer>false</organismsDiffer>
    <experiments>3</experiments>
</comment>
<comment type="interaction">
    <interactant intactId="EBI-18304435">
        <id>Q5JX71</id>
    </interactant>
    <interactant intactId="EBI-4401517">
        <id>O14653</id>
        <label>GOSR2</label>
    </interactant>
    <organismsDiffer>false</organismsDiffer>
    <experiments>3</experiments>
</comment>
<comment type="interaction">
    <interactant intactId="EBI-18304435">
        <id>Q5JX71</id>
    </interactant>
    <interactant intactId="EBI-11343451">
        <id>Q9NPR9</id>
        <label>GPR108</label>
    </interactant>
    <organismsDiffer>false</organismsDiffer>
    <experiments>3</experiments>
</comment>
<comment type="interaction">
    <interactant intactId="EBI-18304435">
        <id>Q5JX71</id>
    </interactant>
    <interactant intactId="EBI-11955647">
        <id>Q8TDV0</id>
        <label>GPR151</label>
    </interactant>
    <organismsDiffer>false</organismsDiffer>
    <experiments>3</experiments>
</comment>
<comment type="interaction">
    <interactant intactId="EBI-18304435">
        <id>Q5JX71</id>
    </interactant>
    <interactant intactId="EBI-2927498">
        <id>O60883</id>
        <label>GPR37L1</label>
    </interactant>
    <organismsDiffer>false</organismsDiffer>
    <experiments>3</experiments>
</comment>
<comment type="interaction">
    <interactant intactId="EBI-18304435">
        <id>Q5JX71</id>
    </interactant>
    <interactant intactId="EBI-702665">
        <id>P02724</id>
        <label>GYPA</label>
    </interactant>
    <organismsDiffer>false</organismsDiffer>
    <experiments>3</experiments>
</comment>
<comment type="interaction">
    <interactant intactId="EBI-18304435">
        <id>Q5JX71</id>
    </interactant>
    <interactant intactId="EBI-530257">
        <id>Q6Y1H2</id>
        <label>HACD2</label>
    </interactant>
    <organismsDiffer>false</organismsDiffer>
    <experiments>3</experiments>
</comment>
<comment type="interaction">
    <interactant intactId="EBI-18304435">
        <id>Q5JX71</id>
    </interactant>
    <interactant intactId="EBI-5916693">
        <id>Q9HCP6</id>
        <label>HHATL</label>
    </interactant>
    <organismsDiffer>false</organismsDiffer>
    <experiments>3</experiments>
</comment>
<comment type="interaction">
    <interactant intactId="EBI-18304435">
        <id>Q5JX71</id>
    </interactant>
    <interactant intactId="EBI-2806151">
        <id>P09601</id>
        <label>HMOX1</label>
    </interactant>
    <organismsDiffer>false</organismsDiffer>
    <experiments>3</experiments>
</comment>
<comment type="interaction">
    <interactant intactId="EBI-18304435">
        <id>Q5JX71</id>
    </interactant>
    <interactant intactId="EBI-712096">
        <id>P30519</id>
        <label>HMOX2</label>
    </interactant>
    <organismsDiffer>false</organismsDiffer>
    <experiments>3</experiments>
</comment>
<comment type="interaction">
    <interactant intactId="EBI-18304435">
        <id>Q5JX71</id>
    </interactant>
    <interactant intactId="EBI-12937691">
        <id>Q9BUP3-3</id>
        <label>HTATIP2</label>
    </interactant>
    <organismsDiffer>false</organismsDiffer>
    <experiments>3</experiments>
</comment>
<comment type="interaction">
    <interactant intactId="EBI-18304435">
        <id>Q5JX71</id>
    </interactant>
    <interactant intactId="EBI-720480">
        <id>P24593</id>
        <label>IGFBP5</label>
    </interactant>
    <organismsDiffer>false</organismsDiffer>
    <experiments>3</experiments>
</comment>
<comment type="interaction">
    <interactant intactId="EBI-18304435">
        <id>Q5JX71</id>
    </interactant>
    <interactant intactId="EBI-8503746">
        <id>Q9Y5U4</id>
        <label>INSIG2</label>
    </interactant>
    <organismsDiffer>false</organismsDiffer>
    <experiments>3</experiments>
</comment>
<comment type="interaction">
    <interactant intactId="EBI-18304435">
        <id>Q5JX71</id>
    </interactant>
    <interactant intactId="EBI-10266796">
        <id>Q8N5M9</id>
        <label>JAGN1</label>
    </interactant>
    <organismsDiffer>false</organismsDiffer>
    <experiments>3</experiments>
</comment>
<comment type="interaction">
    <interactant intactId="EBI-18304435">
        <id>Q5JX71</id>
    </interactant>
    <interactant intactId="EBI-8632435">
        <id>P43628</id>
        <label>KIR2DL3</label>
    </interactant>
    <organismsDiffer>false</organismsDiffer>
    <experiments>3</experiments>
</comment>
<comment type="interaction">
    <interactant intactId="EBI-18304435">
        <id>Q5JX71</id>
    </interactant>
    <interactant intactId="EBI-2820517">
        <id>Q8TAF8</id>
        <label>LHFPL5</label>
    </interactant>
    <organismsDiffer>false</organismsDiffer>
    <experiments>3</experiments>
</comment>
<comment type="interaction">
    <interactant intactId="EBI-18304435">
        <id>Q5JX71</id>
    </interactant>
    <interactant intactId="EBI-12033434">
        <id>Q9UBY5</id>
        <label>LPAR3</label>
    </interactant>
    <organismsDiffer>false</organismsDiffer>
    <experiments>3</experiments>
</comment>
<comment type="interaction">
    <interactant intactId="EBI-18304435">
        <id>Q5JX71</id>
    </interactant>
    <interactant intactId="EBI-2830349">
        <id>Q7Z4F1</id>
        <label>LRP10</label>
    </interactant>
    <organismsDiffer>false</organismsDiffer>
    <experiments>3</experiments>
</comment>
<comment type="interaction">
    <interactant intactId="EBI-18304435">
        <id>Q5JX71</id>
    </interactant>
    <interactant intactId="EBI-3932027">
        <id>P21145</id>
        <label>MAL</label>
    </interactant>
    <organismsDiffer>false</organismsDiffer>
    <experiments>3</experiments>
</comment>
<comment type="interaction">
    <interactant intactId="EBI-18304435">
        <id>Q5JX71</id>
    </interactant>
    <interactant intactId="EBI-10317612">
        <id>Q9P0N8</id>
        <label>MARCHF2</label>
    </interactant>
    <organismsDiffer>false</organismsDiffer>
    <experiments>3</experiments>
</comment>
<comment type="interaction">
    <interactant intactId="EBI-18304435">
        <id>Q5JX71</id>
    </interactant>
    <interactant intactId="EBI-11956541">
        <id>Q9GZY8-5</id>
        <label>MFF</label>
    </interactant>
    <organismsDiffer>false</organismsDiffer>
    <experiments>3</experiments>
</comment>
<comment type="interaction">
    <interactant intactId="EBI-18304435">
        <id>Q5JX71</id>
    </interactant>
    <interactant intactId="EBI-12866138">
        <id>A0A0C4DFN3</id>
        <label>MGLL</label>
    </interactant>
    <organismsDiffer>false</organismsDiffer>
    <experiments>3</experiments>
</comment>
<comment type="interaction">
    <interactant intactId="EBI-18304435">
        <id>Q5JX71</id>
    </interactant>
    <interactant intactId="EBI-8449636">
        <id>P30301</id>
        <label>MIP</label>
    </interactant>
    <organismsDiffer>false</organismsDiffer>
    <experiments>3</experiments>
</comment>
<comment type="interaction">
    <interactant intactId="EBI-18304435">
        <id>Q5JX71</id>
    </interactant>
    <interactant intactId="EBI-17873222">
        <id>Q15546</id>
        <label>MMD</label>
    </interactant>
    <organismsDiffer>false</organismsDiffer>
    <experiments>3</experiments>
</comment>
<comment type="interaction">
    <interactant intactId="EBI-18304435">
        <id>Q5JX71</id>
    </interactant>
    <interactant intactId="EBI-13349813">
        <id>Q8IY49-2</id>
        <label>MMD2</label>
    </interactant>
    <organismsDiffer>false</organismsDiffer>
    <experiments>3</experiments>
</comment>
<comment type="interaction">
    <interactant intactId="EBI-18304435">
        <id>Q5JX71</id>
    </interactant>
    <interactant intactId="EBI-2808234">
        <id>P11836</id>
        <label>MS4A1</label>
    </interactant>
    <organismsDiffer>false</organismsDiffer>
    <experiments>3</experiments>
</comment>
<comment type="interaction">
    <interactant intactId="EBI-18304435">
        <id>Q5JX71</id>
    </interactant>
    <interactant intactId="EBI-12070086">
        <id>Q5J8X5</id>
        <label>MS4A13</label>
    </interactant>
    <organismsDiffer>false</organismsDiffer>
    <experiments>3</experiments>
</comment>
<comment type="interaction">
    <interactant intactId="EBI-18304435">
        <id>Q5JX71</id>
    </interactant>
    <interactant intactId="EBI-13301517">
        <id>Q96S97</id>
        <label>MYADM</label>
    </interactant>
    <organismsDiffer>false</organismsDiffer>
    <experiments>3</experiments>
</comment>
<comment type="interaction">
    <interactant intactId="EBI-18304435">
        <id>Q5JX71</id>
    </interactant>
    <interactant intactId="EBI-17641390">
        <id>A6NDP7</id>
        <label>MYADML2</label>
    </interactant>
    <organismsDiffer>false</organismsDiffer>
    <experiments>3</experiments>
</comment>
<comment type="interaction">
    <interactant intactId="EBI-18304435">
        <id>Q5JX71</id>
    </interactant>
    <interactant intactId="EBI-3921185">
        <id>Q9H115</id>
        <label>NAPB</label>
    </interactant>
    <organismsDiffer>false</organismsDiffer>
    <experiments>3</experiments>
</comment>
<comment type="interaction">
    <interactant intactId="EBI-18304435">
        <id>Q5JX71</id>
    </interactant>
    <interactant intactId="EBI-2863634">
        <id>Q9UHE5</id>
        <label>NAT8</label>
    </interactant>
    <organismsDiffer>false</organismsDiffer>
    <experiments>3</experiments>
</comment>
<comment type="interaction">
    <interactant intactId="EBI-18304435">
        <id>Q5JX71</id>
    </interactant>
    <interactant intactId="EBI-14989262">
        <id>O14931</id>
        <label>NCR3</label>
    </interactant>
    <organismsDiffer>false</organismsDiffer>
    <experiments>3</experiments>
</comment>
<comment type="interaction">
    <interactant intactId="EBI-18304435">
        <id>Q5JX71</id>
    </interactant>
    <interactant intactId="EBI-10317425">
        <id>Q9NZG7</id>
        <label>NINJ2</label>
    </interactant>
    <organismsDiffer>false</organismsDiffer>
    <experiments>3</experiments>
</comment>
<comment type="interaction">
    <interactant intactId="EBI-18304435">
        <id>Q5JX71</id>
    </interactant>
    <interactant intactId="EBI-12051377">
        <id>Q8N912</id>
        <label>NRAC</label>
    </interactant>
    <organismsDiffer>false</organismsDiffer>
    <experiments>3</experiments>
</comment>
<comment type="interaction">
    <interactant intactId="EBI-18304435">
        <id>Q5JX71</id>
    </interactant>
    <interactant intactId="EBI-10262547">
        <id>Q8IXM6</id>
        <label>NRM</label>
    </interactant>
    <organismsDiffer>false</organismsDiffer>
    <experiments>3</experiments>
</comment>
<comment type="interaction">
    <interactant intactId="EBI-18304435">
        <id>Q5JX71</id>
    </interactant>
    <interactant intactId="EBI-17973370">
        <id>Q969Y0</id>
        <label>NXPE3</label>
    </interactant>
    <organismsDiffer>false</organismsDiffer>
    <experiments>3</experiments>
</comment>
<comment type="interaction">
    <interactant intactId="EBI-18304435">
        <id>Q5JX71</id>
    </interactant>
    <interactant intactId="EBI-2804156">
        <id>Q6UX06</id>
        <label>OLFM4</label>
    </interactant>
    <organismsDiffer>false</organismsDiffer>
    <experiments>3</experiments>
</comment>
<comment type="interaction">
    <interactant intactId="EBI-18304435">
        <id>Q5JX71</id>
    </interactant>
    <interactant intactId="EBI-721750">
        <id>Q8N138</id>
        <label>ORMDL3</label>
    </interactant>
    <organismsDiffer>false</organismsDiffer>
    <experiments>3</experiments>
</comment>
<comment type="interaction">
    <interactant intactId="EBI-18304435">
        <id>Q5JX71</id>
    </interactant>
    <interactant intactId="EBI-18311020">
        <id>Q9NRC9</id>
        <label>OTOR</label>
    </interactant>
    <organismsDiffer>false</organismsDiffer>
    <experiments>3</experiments>
</comment>
<comment type="interaction">
    <interactant intactId="EBI-18304435">
        <id>Q5JX71</id>
    </interactant>
    <interactant intactId="EBI-10694587">
        <id>Q86WK9</id>
        <label>PAQR7</label>
    </interactant>
    <organismsDiffer>false</organismsDiffer>
    <experiments>3</experiments>
</comment>
<comment type="interaction">
    <interactant intactId="EBI-18304435">
        <id>Q5JX71</id>
    </interactant>
    <interactant intactId="EBI-12213001">
        <id>I3L0A0</id>
        <label>PEDS1-UBE2V1</label>
    </interactant>
    <organismsDiffer>false</organismsDiffer>
    <experiments>3</experiments>
</comment>
<comment type="interaction">
    <interactant intactId="EBI-18304435">
        <id>Q5JX71</id>
    </interactant>
    <interactant intactId="EBI-12092917">
        <id>Q9UHJ9-5</id>
        <label>PGAP2</label>
    </interactant>
    <organismsDiffer>false</organismsDiffer>
    <experiments>3</experiments>
</comment>
<comment type="interaction">
    <interactant intactId="EBI-18304435">
        <id>Q5JX71</id>
    </interactant>
    <interactant intactId="EBI-12339509">
        <id>Q96LB9</id>
        <label>PGLYRP3</label>
    </interactant>
    <organismsDiffer>false</organismsDiffer>
    <experiments>3</experiments>
</comment>
<comment type="interaction">
    <interactant intactId="EBI-18304435">
        <id>Q5JX71</id>
    </interactant>
    <interactant intactId="EBI-692836">
        <id>P26678</id>
        <label>PLN</label>
    </interactant>
    <organismsDiffer>false</organismsDiffer>
    <experiments>3</experiments>
</comment>
<comment type="interaction">
    <interactant intactId="EBI-18304435">
        <id>Q5JX71</id>
    </interactant>
    <interactant intactId="EBI-12188331">
        <id>P60201-2</id>
        <label>PLP1</label>
    </interactant>
    <organismsDiffer>false</organismsDiffer>
    <experiments>3</experiments>
</comment>
<comment type="interaction">
    <interactant intactId="EBI-18304435">
        <id>Q5JX71</id>
    </interactant>
    <interactant intactId="EBI-608347">
        <id>Q04941</id>
        <label>PLP2</label>
    </interactant>
    <organismsDiffer>false</organismsDiffer>
    <experiments>3</experiments>
</comment>
<comment type="interaction">
    <interactant intactId="EBI-18304435">
        <id>Q5JX71</id>
    </interactant>
    <interactant intactId="EBI-10485931">
        <id>Q5VZY2</id>
        <label>PLPP4</label>
    </interactant>
    <organismsDiffer>false</organismsDiffer>
    <experiments>3</experiments>
</comment>
<comment type="interaction">
    <interactant intactId="EBI-18304435">
        <id>Q5JX71</id>
    </interactant>
    <interactant intactId="EBI-11721828">
        <id>Q8IY26</id>
        <label>PLPP6</label>
    </interactant>
    <organismsDiffer>false</organismsDiffer>
    <experiments>3</experiments>
</comment>
<comment type="interaction">
    <interactant intactId="EBI-18304435">
        <id>Q5JX71</id>
    </interactant>
    <interactant intactId="EBI-2845982">
        <id>Q01453</id>
        <label>PMP22</label>
    </interactant>
    <organismsDiffer>false</organismsDiffer>
    <experiments>3</experiments>
</comment>
<comment type="interaction">
    <interactant intactId="EBI-18304435">
        <id>Q5JX71</id>
    </interactant>
    <interactant intactId="EBI-8652812">
        <id>P54315</id>
        <label>PNLIPRP1</label>
    </interactant>
    <organismsDiffer>false</organismsDiffer>
    <experiments>3</experiments>
</comment>
<comment type="interaction">
    <interactant intactId="EBI-18304435">
        <id>Q5JX71</id>
    </interactant>
    <interactant intactId="EBI-14210385">
        <id>Q59EV6</id>
        <label>PPGB</label>
    </interactant>
    <organismsDiffer>false</organismsDiffer>
    <experiments>3</experiments>
</comment>
<comment type="interaction">
    <interactant intactId="EBI-18304435">
        <id>Q5JX71</id>
    </interactant>
    <interactant intactId="EBI-10173935">
        <id>A5D903</id>
        <label>PRB1</label>
    </interactant>
    <organismsDiffer>false</organismsDiffer>
    <experiments>3</experiments>
</comment>
<comment type="interaction">
    <interactant intactId="EBI-18304435">
        <id>Q5JX71</id>
    </interactant>
    <interactant intactId="EBI-14199621">
        <id>Q13635-3</id>
        <label>PTCH1</label>
    </interactant>
    <organismsDiffer>false</organismsDiffer>
    <experiments>3</experiments>
</comment>
<comment type="interaction">
    <interactant intactId="EBI-18304435">
        <id>Q5JX71</id>
    </interactant>
    <interactant intactId="EBI-14772355">
        <id>Q02094</id>
        <label>RHAG</label>
    </interactant>
    <organismsDiffer>false</organismsDiffer>
    <experiments>3</experiments>
</comment>
<comment type="interaction">
    <interactant intactId="EBI-18304435">
        <id>Q5JX71</id>
    </interactant>
    <interactant intactId="EBI-1052363">
        <id>Q9NS64</id>
        <label>RPRM</label>
    </interactant>
    <organismsDiffer>false</organismsDiffer>
    <experiments>3</experiments>
</comment>
<comment type="interaction">
    <interactant intactId="EBI-18304435">
        <id>Q5JX71</id>
    </interactant>
    <interactant intactId="EBI-10244780">
        <id>Q5QGT7</id>
        <label>RTP2</label>
    </interactant>
    <organismsDiffer>false</organismsDiffer>
    <experiments>3</experiments>
</comment>
<comment type="interaction">
    <interactant intactId="EBI-18304435">
        <id>Q5JX71</id>
    </interactant>
    <interactant intactId="EBI-8636004">
        <id>Q96GQ5</id>
        <label>RUSF1</label>
    </interactant>
    <organismsDiffer>false</organismsDiffer>
    <experiments>3</experiments>
</comment>
<comment type="interaction">
    <interactant intactId="EBI-18304435">
        <id>Q5JX71</id>
    </interactant>
    <interactant intactId="EBI-752230">
        <id>P29034</id>
        <label>S100A2</label>
    </interactant>
    <organismsDiffer>false</organismsDiffer>
    <experiments>3</experiments>
</comment>
<comment type="interaction">
    <interactant intactId="EBI-18304435">
        <id>Q5JX71</id>
    </interactant>
    <interactant intactId="EBI-12056025">
        <id>Q14162</id>
        <label>SCARF1</label>
    </interactant>
    <organismsDiffer>false</organismsDiffer>
    <experiments>3</experiments>
</comment>
<comment type="interaction">
    <interactant intactId="EBI-18304435">
        <id>Q5JX71</id>
    </interactant>
    <interactant intactId="EBI-12825395">
        <id>O95968</id>
        <label>SCGB1D1</label>
    </interactant>
    <organismsDiffer>false</organismsDiffer>
    <experiments>3</experiments>
</comment>
<comment type="interaction">
    <interactant intactId="EBI-18304435">
        <id>Q5JX71</id>
    </interactant>
    <interactant intactId="EBI-10189029">
        <id>O75711</id>
        <label>SCRG1</label>
    </interactant>
    <organismsDiffer>false</organismsDiffer>
    <experiments>3</experiments>
</comment>
<comment type="interaction">
    <interactant intactId="EBI-18304435">
        <id>Q5JX71</id>
    </interactant>
    <interactant intactId="EBI-8652744">
        <id>Q96IW7</id>
        <label>SEC22A</label>
    </interactant>
    <organismsDiffer>false</organismsDiffer>
    <experiments>3</experiments>
</comment>
<comment type="interaction">
    <interactant intactId="EBI-18304435">
        <id>Q5JX71</id>
    </interactant>
    <interactant intactId="EBI-1058865">
        <id>O75396</id>
        <label>SEC22B</label>
    </interactant>
    <organismsDiffer>false</organismsDiffer>
    <experiments>3</experiments>
</comment>
<comment type="interaction">
    <interactant intactId="EBI-18304435">
        <id>Q5JX71</id>
    </interactant>
    <interactant intactId="EBI-4402709">
        <id>P60059</id>
        <label>SEC61G</label>
    </interactant>
    <organismsDiffer>false</organismsDiffer>
    <experiments>3</experiments>
</comment>
<comment type="interaction">
    <interactant intactId="EBI-18304435">
        <id>Q5JX71</id>
    </interactant>
    <interactant intactId="EBI-9679163">
        <id>Q9Y6D0</id>
        <label>SELENOK</label>
    </interactant>
    <organismsDiffer>false</organismsDiffer>
    <experiments>3</experiments>
</comment>
<comment type="interaction">
    <interactant intactId="EBI-18304435">
        <id>Q5JX71</id>
    </interactant>
    <interactant intactId="EBI-18310377">
        <id>Q1RMY5</id>
        <label>SEMA6C</label>
    </interactant>
    <organismsDiffer>false</organismsDiffer>
    <experiments>3</experiments>
</comment>
<comment type="interaction">
    <interactant intactId="EBI-18304435">
        <id>Q5JX71</id>
    </interactant>
    <interactant intactId="EBI-10329948">
        <id>Q9Y6X1</id>
        <label>SERP1</label>
    </interactant>
    <organismsDiffer>false</organismsDiffer>
    <experiments>3</experiments>
</comment>
<comment type="interaction">
    <interactant intactId="EBI-18304435">
        <id>Q5JX71</id>
    </interactant>
    <interactant intactId="EBI-10197617">
        <id>P11686</id>
        <label>SFTPC</label>
    </interactant>
    <organismsDiffer>false</organismsDiffer>
    <experiments>3</experiments>
</comment>
<comment type="interaction">
    <interactant intactId="EBI-18304435">
        <id>Q5JX71</id>
    </interactant>
    <interactant intactId="EBI-12938720">
        <id>Q8WWT9</id>
        <label>SLC13A3</label>
    </interactant>
    <organismsDiffer>false</organismsDiffer>
    <experiments>3</experiments>
</comment>
<comment type="interaction">
    <interactant intactId="EBI-18304435">
        <id>Q5JX71</id>
    </interactant>
    <interactant intactId="EBI-745376">
        <id>P43005</id>
        <label>SLC1A1</label>
    </interactant>
    <organismsDiffer>false</organismsDiffer>
    <experiments>3</experiments>
</comment>
<comment type="interaction">
    <interactant intactId="EBI-18304435">
        <id>Q5JX71</id>
    </interactant>
    <interactant intactId="EBI-10262251">
        <id>Q8IWU4</id>
        <label>SLC30A8</label>
    </interactant>
    <organismsDiffer>false</organismsDiffer>
    <experiments>3</experiments>
</comment>
<comment type="interaction">
    <interactant intactId="EBI-18304435">
        <id>Q5JX71</id>
    </interactant>
    <interactant intactId="EBI-12870360">
        <id>P78382</id>
        <label>SLC35A1</label>
    </interactant>
    <organismsDiffer>false</organismsDiffer>
    <experiments>3</experiments>
</comment>
<comment type="interaction">
    <interactant intactId="EBI-18304435">
        <id>Q5JX71</id>
    </interactant>
    <interactant intactId="EBI-12363689">
        <id>Q96G79</id>
        <label>SLC35A4</label>
    </interactant>
    <organismsDiffer>false</organismsDiffer>
    <experiments>3</experiments>
</comment>
<comment type="interaction">
    <interactant intactId="EBI-18304435">
        <id>Q5JX71</id>
    </interactant>
    <interactant intactId="EBI-10281213">
        <id>Q969S0</id>
        <label>SLC35B4</label>
    </interactant>
    <organismsDiffer>false</organismsDiffer>
    <experiments>3</experiments>
</comment>
<comment type="interaction">
    <interactant intactId="EBI-18304435">
        <id>Q5JX71</id>
    </interactant>
    <interactant intactId="EBI-13389236">
        <id>Q7Z769</id>
        <label>SLC35E3</label>
    </interactant>
    <organismsDiffer>false</organismsDiffer>
    <experiments>3</experiments>
</comment>
<comment type="interaction">
    <interactant intactId="EBI-18304435">
        <id>Q5JX71</id>
    </interactant>
    <interactant intactId="EBI-727304">
        <id>Q8TBE7</id>
        <label>SLC35G2</label>
    </interactant>
    <organismsDiffer>false</organismsDiffer>
    <experiments>3</experiments>
</comment>
<comment type="interaction">
    <interactant intactId="EBI-18304435">
        <id>Q5JX71</id>
    </interactant>
    <interactant intactId="EBI-10314552">
        <id>Q9NVC3</id>
        <label>SLC38A7</label>
    </interactant>
    <organismsDiffer>false</organismsDiffer>
    <experiments>3</experiments>
</comment>
<comment type="interaction">
    <interactant intactId="EBI-18304435">
        <id>Q5JX71</id>
    </interactant>
    <interactant intactId="EBI-10309896">
        <id>Q9HAB3</id>
        <label>SLC52A2</label>
    </interactant>
    <organismsDiffer>false</organismsDiffer>
    <experiments>3</experiments>
</comment>
<comment type="interaction">
    <interactant intactId="EBI-18304435">
        <id>Q5JX71</id>
    </interactant>
    <interactant intactId="EBI-5235586">
        <id>Q8TBB6</id>
        <label>SLC7A14</label>
    </interactant>
    <organismsDiffer>false</organismsDiffer>
    <experiments>3</experiments>
</comment>
<comment type="interaction">
    <interactant intactId="EBI-18304435">
        <id>Q5JX71</id>
    </interactant>
    <interactant intactId="EBI-8640191">
        <id>Q9NRQ5</id>
        <label>SMCO4</label>
    </interactant>
    <organismsDiffer>false</organismsDiffer>
    <experiments>3</experiments>
</comment>
<comment type="interaction">
    <interactant intactId="EBI-18304435">
        <id>Q5JX71</id>
    </interactant>
    <interactant intactId="EBI-12188413">
        <id>B2RUZ4</id>
        <label>SMIM1</label>
    </interactant>
    <organismsDiffer>false</organismsDiffer>
    <experiments>3</experiments>
</comment>
<comment type="interaction">
    <interactant intactId="EBI-18304435">
        <id>Q5JX71</id>
    </interactant>
    <interactant intactId="EBI-11957067">
        <id>Q6UX34</id>
        <label>SNORC</label>
    </interactant>
    <organismsDiffer>false</organismsDiffer>
    <experiments>3</experiments>
</comment>
<comment type="interaction">
    <interactant intactId="EBI-18304435">
        <id>Q5JX71</id>
    </interactant>
    <interactant intactId="EBI-738687">
        <id>P02808</id>
        <label>STATH</label>
    </interactant>
    <organismsDiffer>false</organismsDiffer>
    <experiments>3</experiments>
</comment>
<comment type="interaction">
    <interactant intactId="EBI-18304435">
        <id>Q5JX71</id>
    </interactant>
    <interactant intactId="EBI-9071709">
        <id>P61266</id>
        <label>STX1B</label>
    </interactant>
    <organismsDiffer>false</organismsDiffer>
    <experiments>3</experiments>
</comment>
<comment type="interaction">
    <interactant intactId="EBI-18304435">
        <id>Q5JX71</id>
    </interactant>
    <interactant intactId="EBI-1394295">
        <id>Q13277</id>
        <label>STX3</label>
    </interactant>
    <organismsDiffer>false</organismsDiffer>
    <experiments>3</experiments>
</comment>
<comment type="interaction">
    <interactant intactId="EBI-18304435">
        <id>Q5JX71</id>
    </interactant>
    <interactant intactId="EBI-714206">
        <id>Q13190</id>
        <label>STX5</label>
    </interactant>
    <organismsDiffer>false</organismsDiffer>
    <experiments>3</experiments>
</comment>
<comment type="interaction">
    <interactant intactId="EBI-18304435">
        <id>Q5JX71</id>
    </interactant>
    <interactant intactId="EBI-727240">
        <id>Q9UNK0</id>
        <label>STX8</label>
    </interactant>
    <organismsDiffer>false</organismsDiffer>
    <experiments>3</experiments>
</comment>
<comment type="interaction">
    <interactant intactId="EBI-18304435">
        <id>Q5JX71</id>
    </interactant>
    <interactant intactId="EBI-12187159">
        <id>O43759-2</id>
        <label>SYNGR1</label>
    </interactant>
    <organismsDiffer>false</organismsDiffer>
    <experiments>3</experiments>
</comment>
<comment type="interaction">
    <interactant intactId="EBI-18304435">
        <id>Q5JX71</id>
    </interactant>
    <interactant intactId="EBI-13373352">
        <id>Q9BQS2-2</id>
        <label>SYT15</label>
    </interactant>
    <organismsDiffer>false</organismsDiffer>
    <experiments>3</experiments>
</comment>
<comment type="interaction">
    <interactant intactId="EBI-18304435">
        <id>Q5JX71</id>
    </interactant>
    <interactant intactId="EBI-2877718">
        <id>Q9NZ01</id>
        <label>TECR</label>
    </interactant>
    <organismsDiffer>false</organismsDiffer>
    <experiments>3</experiments>
</comment>
<comment type="interaction">
    <interactant intactId="EBI-18304435">
        <id>Q5JX71</id>
    </interactant>
    <interactant intactId="EBI-10329860">
        <id>Q9Y6I9</id>
        <label>TEX264</label>
    </interactant>
    <organismsDiffer>false</organismsDiffer>
    <experiments>3</experiments>
</comment>
<comment type="interaction">
    <interactant intactId="EBI-18304435">
        <id>Q5JX71</id>
    </interactant>
    <interactant intactId="EBI-355727">
        <id>P02786</id>
        <label>TFRC</label>
    </interactant>
    <organismsDiffer>false</organismsDiffer>
    <experiments>3</experiments>
</comment>
<comment type="interaction">
    <interactant intactId="EBI-18304435">
        <id>Q5JX71</id>
    </interactant>
    <interactant intactId="EBI-941422">
        <id>P07204</id>
        <label>THBD</label>
    </interactant>
    <organismsDiffer>false</organismsDiffer>
    <experiments>3</experiments>
</comment>
<comment type="interaction">
    <interactant intactId="EBI-18304435">
        <id>Q5JX71</id>
    </interactant>
    <interactant intactId="EBI-311394">
        <id>Q9C0I4</id>
        <label>THSD7B</label>
    </interactant>
    <organismsDiffer>false</organismsDiffer>
    <experiments>3</experiments>
</comment>
<comment type="interaction">
    <interactant intactId="EBI-18304435">
        <id>Q5JX71</id>
    </interactant>
    <interactant intactId="EBI-13082040">
        <id>Q9BZW4</id>
        <label>TM6SF2</label>
    </interactant>
    <organismsDiffer>false</organismsDiffer>
    <experiments>3</experiments>
</comment>
<comment type="interaction">
    <interactant intactId="EBI-18304435">
        <id>Q5JX71</id>
    </interactant>
    <interactant intactId="EBI-1045825">
        <id>P55061</id>
        <label>TMBIM6</label>
    </interactant>
    <organismsDiffer>false</organismsDiffer>
    <experiments>3</experiments>
</comment>
<comment type="interaction">
    <interactant intactId="EBI-18304435">
        <id>Q5JX71</id>
    </interactant>
    <interactant intactId="EBI-8644968">
        <id>Q9NV29</id>
        <label>TMEM100</label>
    </interactant>
    <organismsDiffer>false</organismsDiffer>
    <experiments>3</experiments>
</comment>
<comment type="interaction">
    <interactant intactId="EBI-18304435">
        <id>Q5JX71</id>
    </interactant>
    <interactant intactId="EBI-12845616">
        <id>Q6UX40</id>
        <label>TMEM107</label>
    </interactant>
    <organismsDiffer>false</organismsDiffer>
    <experiments>3</experiments>
</comment>
<comment type="interaction">
    <interactant intactId="EBI-18304435">
        <id>Q5JX71</id>
    </interactant>
    <interactant intactId="EBI-723946">
        <id>P17152</id>
        <label>TMEM11</label>
    </interactant>
    <organismsDiffer>false</organismsDiffer>
    <experiments>3</experiments>
</comment>
<comment type="interaction">
    <interactant intactId="EBI-18304435">
        <id>Q5JX71</id>
    </interactant>
    <interactant intactId="EBI-727322">
        <id>Q9BXJ8</id>
        <label>TMEM120A</label>
    </interactant>
    <organismsDiffer>false</organismsDiffer>
    <experiments>3</experiments>
</comment>
<comment type="interaction">
    <interactant intactId="EBI-18304435">
        <id>Q5JX71</id>
    </interactant>
    <interactant intactId="EBI-10694905">
        <id>Q5BJH2-2</id>
        <label>TMEM128</label>
    </interactant>
    <organismsDiffer>false</organismsDiffer>
    <experiments>3</experiments>
</comment>
<comment type="interaction">
    <interactant intactId="EBI-18304435">
        <id>Q5JX71</id>
    </interactant>
    <interactant intactId="EBI-2844246">
        <id>Q9NV12</id>
        <label>TMEM140</label>
    </interactant>
    <organismsDiffer>false</organismsDiffer>
    <experiments>3</experiments>
</comment>
<comment type="interaction">
    <interactant intactId="EBI-18304435">
        <id>Q5JX71</id>
    </interactant>
    <interactant intactId="EBI-17681263">
        <id>Q96I45</id>
        <label>TMEM141</label>
    </interactant>
    <organismsDiffer>false</organismsDiffer>
    <experiments>3</experiments>
</comment>
<comment type="interaction">
    <interactant intactId="EBI-18304435">
        <id>Q5JX71</id>
    </interactant>
    <interactant intactId="EBI-8638294">
        <id>Q9NUH8</id>
        <label>TMEM14B</label>
    </interactant>
    <organismsDiffer>false</organismsDiffer>
    <experiments>3</experiments>
</comment>
<comment type="interaction">
    <interactant intactId="EBI-18304435">
        <id>Q5JX71</id>
    </interactant>
    <interactant intactId="EBI-2339195">
        <id>Q9P0S9</id>
        <label>TMEM14C</label>
    </interactant>
    <organismsDiffer>false</organismsDiffer>
    <experiments>3</experiments>
</comment>
<comment type="interaction">
    <interactant intactId="EBI-18304435">
        <id>Q5JX71</id>
    </interactant>
    <interactant intactId="EBI-12274070">
        <id>Q969S6</id>
        <label>TMEM203</label>
    </interactant>
    <organismsDiffer>false</organismsDiffer>
    <experiments>3</experiments>
</comment>
<comment type="interaction">
    <interactant intactId="EBI-18304435">
        <id>Q5JX71</id>
    </interactant>
    <interactant intactId="EBI-12876824">
        <id>Q9BTX3</id>
        <label>TMEM208</label>
    </interactant>
    <organismsDiffer>false</organismsDiffer>
    <experiments>3</experiments>
</comment>
<comment type="interaction">
    <interactant intactId="EBI-18304435">
        <id>Q5JX71</id>
    </interactant>
    <interactant intactId="EBI-10173151">
        <id>A2RU14</id>
        <label>TMEM218</label>
    </interactant>
    <organismsDiffer>false</organismsDiffer>
    <experiments>3</experiments>
</comment>
<comment type="interaction">
    <interactant intactId="EBI-18304435">
        <id>Q5JX71</id>
    </interactant>
    <interactant intactId="EBI-347385">
        <id>Q9H0R3</id>
        <label>TMEM222</label>
    </interactant>
    <organismsDiffer>false</organismsDiffer>
    <experiments>3</experiments>
</comment>
<comment type="interaction">
    <interactant intactId="EBI-18304435">
        <id>Q5JX71</id>
    </interactant>
    <interactant intactId="EBI-12195227">
        <id>Q8NBD8</id>
        <label>TMEM229B</label>
    </interactant>
    <organismsDiffer>false</organismsDiffer>
    <experiments>3</experiments>
</comment>
<comment type="interaction">
    <interactant intactId="EBI-18304435">
        <id>Q5JX71</id>
    </interactant>
    <interactant intactId="EBI-13378608">
        <id>Q5W0B7</id>
        <label>TMEM236</label>
    </interactant>
    <organismsDiffer>false</organismsDiffer>
    <experiments>3</experiments>
</comment>
<comment type="interaction">
    <interactant intactId="EBI-18304435">
        <id>Q5JX71</id>
    </interactant>
    <interactant intactId="EBI-12887458">
        <id>Q9BU79</id>
        <label>TMEM243</label>
    </interactant>
    <organismsDiffer>false</organismsDiffer>
    <experiments>3</experiments>
</comment>
<comment type="interaction">
    <interactant intactId="EBI-18304435">
        <id>Q5JX71</id>
    </interactant>
    <interactant intactId="EBI-11956809">
        <id>Q8TBM7</id>
        <label>TMEM254</label>
    </interactant>
    <organismsDiffer>false</organismsDiffer>
    <experiments>3</experiments>
</comment>
<comment type="interaction">
    <interactant intactId="EBI-18304435">
        <id>Q5JX71</id>
    </interactant>
    <interactant intactId="EBI-12038591">
        <id>Q69YG0</id>
        <label>TMEM42</label>
    </interactant>
    <organismsDiffer>false</organismsDiffer>
    <experiments>3</experiments>
</comment>
<comment type="interaction">
    <interactant intactId="EBI-18304435">
        <id>Q5JX71</id>
    </interactant>
    <interactant intactId="EBI-721293">
        <id>Q9BTV4</id>
        <label>TMEM43</label>
    </interactant>
    <organismsDiffer>false</organismsDiffer>
    <experiments>3</experiments>
</comment>
<comment type="interaction">
    <interactant intactId="EBI-18304435">
        <id>Q5JX71</id>
    </interactant>
    <interactant intactId="EBI-13370320">
        <id>Q9BQJ4</id>
        <label>TMEM47</label>
    </interactant>
    <organismsDiffer>false</organismsDiffer>
    <experiments>3</experiments>
</comment>
<comment type="interaction">
    <interactant intactId="EBI-18304435">
        <id>Q5JX71</id>
    </interactant>
    <interactant intactId="EBI-12366453">
        <id>P56557</id>
        <label>TMEM50B</label>
    </interactant>
    <organismsDiffer>false</organismsDiffer>
    <experiments>3</experiments>
</comment>
<comment type="interaction">
    <interactant intactId="EBI-18304435">
        <id>Q5JX71</id>
    </interactant>
    <interactant intactId="EBI-2852148">
        <id>Q9H2L4</id>
        <label>TMEM60</label>
    </interactant>
    <organismsDiffer>false</organismsDiffer>
    <experiments>3</experiments>
</comment>
<comment type="interaction">
    <interactant intactId="EBI-18304435">
        <id>Q5JX71</id>
    </interactant>
    <interactant intactId="EBI-6656213">
        <id>Q6PI78</id>
        <label>TMEM65</label>
    </interactant>
    <organismsDiffer>false</organismsDiffer>
    <experiments>3</experiments>
</comment>
<comment type="interaction">
    <interactant intactId="EBI-18304435">
        <id>Q5JX71</id>
    </interactant>
    <interactant intactId="EBI-12878352">
        <id>A0PK05</id>
        <label>TMEM72</label>
    </interactant>
    <organismsDiffer>false</organismsDiffer>
    <experiments>3</experiments>
</comment>
<comment type="interaction">
    <interactant intactId="EBI-18304435">
        <id>Q5JX71</id>
    </interactant>
    <interactant intactId="EBI-8649725">
        <id>Q9BSE2</id>
        <label>TMEM79</label>
    </interactant>
    <organismsDiffer>false</organismsDiffer>
    <experiments>3</experiments>
</comment>
<comment type="interaction">
    <interactant intactId="EBI-18304435">
        <id>Q5JX71</id>
    </interactant>
    <interactant intactId="EBI-12015604">
        <id>Q8N2M4</id>
        <label>TMEM86A</label>
    </interactant>
    <organismsDiffer>false</organismsDiffer>
    <experiments>3</experiments>
</comment>
<comment type="interaction">
    <interactant intactId="EBI-18304435">
        <id>Q5JX71</id>
    </interactant>
    <interactant intactId="EBI-2548832">
        <id>Q8N661</id>
        <label>TMEM86B</label>
    </interactant>
    <organismsDiffer>false</organismsDiffer>
    <experiments>3</experiments>
</comment>
<comment type="interaction">
    <interactant intactId="EBI-18304435">
        <id>Q5JX71</id>
    </interactant>
    <interactant intactId="EBI-12111910">
        <id>Q5BJF2</id>
        <label>TMEM97</label>
    </interactant>
    <organismsDiffer>false</organismsDiffer>
    <experiments>3</experiments>
</comment>
<comment type="interaction">
    <interactant intactId="EBI-18304435">
        <id>Q5JX71</id>
    </interactant>
    <interactant intactId="EBI-10313040">
        <id>Q9NRS4</id>
        <label>TMPRSS4</label>
    </interactant>
    <organismsDiffer>false</organismsDiffer>
    <experiments>3</experiments>
</comment>
<comment type="interaction">
    <interactant intactId="EBI-18304435">
        <id>Q5JX71</id>
    </interactant>
    <interactant intactId="EBI-2820477">
        <id>Q71RG4</id>
        <label>TMUB2</label>
    </interactant>
    <organismsDiffer>false</organismsDiffer>
    <experiments>3</experiments>
</comment>
<comment type="interaction">
    <interactant intactId="EBI-18304435">
        <id>Q5JX71</id>
    </interactant>
    <interactant intactId="EBI-359977">
        <id>P01375</id>
        <label>TNF</label>
    </interactant>
    <organismsDiffer>false</organismsDiffer>
    <experiments>3</experiments>
</comment>
<comment type="interaction">
    <interactant intactId="EBI-18304435">
        <id>Q5JX71</id>
    </interactant>
    <interactant intactId="EBI-717441">
        <id>O14798</id>
        <label>TNFRSF10C</label>
    </interactant>
    <organismsDiffer>false</organismsDiffer>
    <experiments>3</experiments>
</comment>
<comment type="interaction">
    <interactant intactId="EBI-18304435">
        <id>Q5JX71</id>
    </interactant>
    <interactant intactId="EBI-12003398">
        <id>Q9H2S6-2</id>
        <label>TNMD</label>
    </interactant>
    <organismsDiffer>false</organismsDiffer>
    <experiments>3</experiments>
</comment>
<comment type="interaction">
    <interactant intactId="EBI-18304435">
        <id>Q5JX71</id>
    </interactant>
    <interactant intactId="EBI-765817">
        <id>Q9Y228</id>
        <label>TRAF3IP3</label>
    </interactant>
    <organismsDiffer>false</organismsDiffer>
    <experiments>3</experiments>
</comment>
<comment type="interaction">
    <interactant intactId="EBI-18304435">
        <id>Q5JX71</id>
    </interactant>
    <interactant intactId="EBI-11996766">
        <id>Q8N609</id>
        <label>TRAM1L1</label>
    </interactant>
    <organismsDiffer>false</organismsDiffer>
    <experiments>3</experiments>
</comment>
<comment type="interaction">
    <interactant intactId="EBI-18304435">
        <id>Q5JX71</id>
    </interactant>
    <interactant intactId="EBI-3914288">
        <id>O60636</id>
        <label>TSPAN2</label>
    </interactant>
    <organismsDiffer>false</organismsDiffer>
    <experiments>3</experiments>
</comment>
<comment type="interaction">
    <interactant intactId="EBI-18304435">
        <id>Q5JX71</id>
    </interactant>
    <interactant intactId="EBI-12045841">
        <id>Q86UF1</id>
        <label>TSPAN33</label>
    </interactant>
    <organismsDiffer>false</organismsDiffer>
    <experiments>3</experiments>
</comment>
<comment type="interaction">
    <interactant intactId="EBI-18304435">
        <id>Q5JX71</id>
    </interactant>
    <interactant intactId="EBI-1042779">
        <id>P41732</id>
        <label>TSPAN7</label>
    </interactant>
    <organismsDiffer>false</organismsDiffer>
    <experiments>3</experiments>
</comment>
<comment type="interaction">
    <interactant intactId="EBI-18304435">
        <id>Q5JX71</id>
    </interactant>
    <interactant intactId="EBI-6623146">
        <id>P30536</id>
        <label>TSPO</label>
    </interactant>
    <organismsDiffer>false</organismsDiffer>
    <experiments>3</experiments>
</comment>
<comment type="interaction">
    <interactant intactId="EBI-18304435">
        <id>Q5JX71</id>
    </interactant>
    <interactant intactId="EBI-10243654">
        <id>Q5BVD1</id>
        <label>TTMP</label>
    </interactant>
    <organismsDiffer>false</organismsDiffer>
    <experiments>3</experiments>
</comment>
<comment type="interaction">
    <interactant intactId="EBI-18304435">
        <id>Q5JX71</id>
    </interactant>
    <interactant intactId="EBI-10304067">
        <id>Q9GZX9</id>
        <label>TWSG1</label>
    </interactant>
    <organismsDiffer>false</organismsDiffer>
    <experiments>3</experiments>
</comment>
<comment type="interaction">
    <interactant intactId="EBI-18304435">
        <id>Q5JX71</id>
    </interactant>
    <interactant intactId="EBI-1380492">
        <id>Q8TF42</id>
        <label>UBASH3B</label>
    </interactant>
    <organismsDiffer>false</organismsDiffer>
    <experiments>2</experiments>
</comment>
<comment type="interaction">
    <interactant intactId="EBI-18304435">
        <id>Q5JX71</id>
    </interactant>
    <interactant intactId="EBI-988826">
        <id>Q9Y385</id>
        <label>UBE2J1</label>
    </interactant>
    <organismsDiffer>false</organismsDiffer>
    <experiments>3</experiments>
</comment>
<comment type="interaction">
    <interactant intactId="EBI-18304435">
        <id>Q5JX71</id>
    </interactant>
    <interactant intactId="EBI-2819725">
        <id>Q9Y5Z9</id>
        <label>UBIAD1</label>
    </interactant>
    <organismsDiffer>false</organismsDiffer>
    <experiments>3</experiments>
</comment>
<comment type="interaction">
    <interactant intactId="EBI-18304435">
        <id>Q5JX71</id>
    </interactant>
    <interactant intactId="EBI-7601760">
        <id>Q53HI1</id>
        <label>UNC50</label>
    </interactant>
    <organismsDiffer>false</organismsDiffer>
    <experiments>3</experiments>
</comment>
<comment type="interaction">
    <interactant intactId="EBI-18304435">
        <id>Q5JX71</id>
    </interactant>
    <interactant intactId="EBI-12237619">
        <id>O75841</id>
        <label>UPK1B</label>
    </interactant>
    <organismsDiffer>false</organismsDiffer>
    <experiments>3</experiments>
</comment>
<comment type="interaction">
    <interactant intactId="EBI-18304435">
        <id>Q5JX71</id>
    </interactant>
    <interactant intactId="EBI-722343">
        <id>Q15836</id>
        <label>VAMP3</label>
    </interactant>
    <organismsDiffer>false</organismsDiffer>
    <experiments>3</experiments>
</comment>
<comment type="interaction">
    <interactant intactId="EBI-18304435">
        <id>Q5JX71</id>
    </interactant>
    <interactant intactId="EBI-744953">
        <id>O75379</id>
        <label>VAMP4</label>
    </interactant>
    <organismsDiffer>false</organismsDiffer>
    <experiments>3</experiments>
</comment>
<comment type="interaction">
    <interactant intactId="EBI-18304435">
        <id>Q5JX71</id>
    </interactant>
    <interactant intactId="EBI-10191195">
        <id>O95183</id>
        <label>VAMP5</label>
    </interactant>
    <organismsDiffer>false</organismsDiffer>
    <experiments>3</experiments>
</comment>
<comment type="interaction">
    <interactant intactId="EBI-18304435">
        <id>Q5JX71</id>
    </interactant>
    <interactant intactId="EBI-6256462">
        <id>Q9BQB6</id>
        <label>VKORC1</label>
    </interactant>
    <organismsDiffer>false</organismsDiffer>
    <experiments>3</experiments>
</comment>
<comment type="interaction">
    <interactant intactId="EBI-18304435">
        <id>Q5JX71</id>
    </interactant>
    <interactant intactId="EBI-2800296">
        <id>Q96GC9</id>
        <label>VMP1</label>
    </interactant>
    <organismsDiffer>false</organismsDiffer>
    <experiments>3</experiments>
</comment>
<comment type="interaction">
    <interactant intactId="EBI-18304435">
        <id>Q5JX71</id>
    </interactant>
    <interactant intactId="EBI-723529">
        <id>Q14508</id>
        <label>WFDC2</label>
    </interactant>
    <organismsDiffer>false</organismsDiffer>
    <experiments>3</experiments>
</comment>
<comment type="interaction">
    <interactant intactId="EBI-18304435">
        <id>Q5JX71</id>
    </interactant>
    <interactant intactId="EBI-720609">
        <id>O76024</id>
        <label>WFS1</label>
    </interactant>
    <organismsDiffer>false</organismsDiffer>
    <experiments>3</experiments>
</comment>
<comment type="interaction">
    <interactant intactId="EBI-18304435">
        <id>Q5JX71</id>
    </interactant>
    <interactant intactId="EBI-751210">
        <id>Q96EC8</id>
        <label>YIPF6</label>
    </interactant>
    <organismsDiffer>false</organismsDiffer>
    <experiments>3</experiments>
</comment>
<comment type="interaction">
    <interactant intactId="EBI-18304435">
        <id>Q5JX71</id>
    </interactant>
    <interactant intactId="EBI-718439">
        <id>O95159</id>
        <label>ZFPL1</label>
    </interactant>
    <organismsDiffer>false</organismsDiffer>
    <experiments>3</experiments>
</comment>
<comment type="subcellular location">
    <subcellularLocation>
        <location evidence="1">Nucleus inner membrane</location>
        <topology evidence="2">Single-pass type I membrane protein</topology>
    </subcellularLocation>
</comment>
<comment type="miscellaneous">
    <text evidence="5">The primate lineage appears to have undergone gene duplication of FAM209, such that humans contain FAM209A and FAM209B.</text>
</comment>
<comment type="similarity">
    <text evidence="5">Belongs to the FAM209 family.</text>
</comment>
<comment type="sequence caution" evidence="5">
    <conflict type="miscellaneous discrepancy">
        <sequence resource="EMBL-CDS" id="AAH29411"/>
    </conflict>
    <text>Contaminating sequence. Potential poly-A sequence.</text>
</comment>
<keyword id="KW-0175">Coiled coil</keyword>
<keyword id="KW-0221">Differentiation</keyword>
<keyword id="KW-0472">Membrane</keyword>
<keyword id="KW-0539">Nucleus</keyword>
<keyword id="KW-1267">Proteomics identification</keyword>
<keyword id="KW-1185">Reference proteome</keyword>
<keyword id="KW-0732">Signal</keyword>
<keyword id="KW-0744">Spermatogenesis</keyword>
<keyword id="KW-0812">Transmembrane</keyword>
<keyword id="KW-1133">Transmembrane helix</keyword>